<reference key="1">
    <citation type="journal article" date="2005" name="J. Bacteriol.">
        <title>Whole-genome sequencing of Staphylococcus haemolyticus uncovers the extreme plasticity of its genome and the evolution of human-colonizing staphylococcal species.</title>
        <authorList>
            <person name="Takeuchi F."/>
            <person name="Watanabe S."/>
            <person name="Baba T."/>
            <person name="Yuzawa H."/>
            <person name="Ito T."/>
            <person name="Morimoto Y."/>
            <person name="Kuroda M."/>
            <person name="Cui L."/>
            <person name="Takahashi M."/>
            <person name="Ankai A."/>
            <person name="Baba S."/>
            <person name="Fukui S."/>
            <person name="Lee J.C."/>
            <person name="Hiramatsu K."/>
        </authorList>
    </citation>
    <scope>NUCLEOTIDE SEQUENCE [LARGE SCALE GENOMIC DNA]</scope>
    <source>
        <strain>JCSC1435</strain>
    </source>
</reference>
<keyword id="KW-0963">Cytoplasm</keyword>
<keyword id="KW-0694">RNA-binding</keyword>
<protein>
    <recommendedName>
        <fullName evidence="1">SsrA-binding protein</fullName>
    </recommendedName>
    <alternativeName>
        <fullName evidence="1">Small protein B</fullName>
    </alternativeName>
</protein>
<feature type="chain" id="PRO_1000002159" description="SsrA-binding protein">
    <location>
        <begin position="1"/>
        <end position="156"/>
    </location>
</feature>
<comment type="function">
    <text evidence="1">Required for rescue of stalled ribosomes mediated by trans-translation. Binds to transfer-messenger RNA (tmRNA), required for stable association of tmRNA with ribosomes. tmRNA and SmpB together mimic tRNA shape, replacing the anticodon stem-loop with SmpB. tmRNA is encoded by the ssrA gene; the 2 termini fold to resemble tRNA(Ala) and it encodes a 'tag peptide', a short internal open reading frame. During trans-translation Ala-aminoacylated tmRNA acts like a tRNA, entering the A-site of stalled ribosomes, displacing the stalled mRNA. The ribosome then switches to translate the ORF on the tmRNA; the nascent peptide is terminated with the 'tag peptide' encoded by the tmRNA and targeted for degradation. The ribosome is freed to recommence translation, which seems to be the essential function of trans-translation.</text>
</comment>
<comment type="subcellular location">
    <subcellularLocation>
        <location evidence="1">Cytoplasm</location>
    </subcellularLocation>
    <text evidence="1">The tmRNA-SmpB complex associates with stalled 70S ribosomes.</text>
</comment>
<comment type="similarity">
    <text evidence="1">Belongs to the SmpB family.</text>
</comment>
<accession>Q4L4L2</accession>
<proteinExistence type="inferred from homology"/>
<gene>
    <name evidence="1" type="primary">smpB</name>
    <name type="ordered locus">SH2104</name>
</gene>
<evidence type="ECO:0000255" key="1">
    <source>
        <dbReference type="HAMAP-Rule" id="MF_00023"/>
    </source>
</evidence>
<name>SSRP_STAHJ</name>
<organism>
    <name type="scientific">Staphylococcus haemolyticus (strain JCSC1435)</name>
    <dbReference type="NCBI Taxonomy" id="279808"/>
    <lineage>
        <taxon>Bacteria</taxon>
        <taxon>Bacillati</taxon>
        <taxon>Bacillota</taxon>
        <taxon>Bacilli</taxon>
        <taxon>Bacillales</taxon>
        <taxon>Staphylococcaceae</taxon>
        <taxon>Staphylococcus</taxon>
    </lineage>
</organism>
<sequence length="156" mass="18005">MAKKKTKSPGTLAENRKARHDYNIEDTIEAGIALKGTEIKSIRRGSANLKDSYAQVKRGEMFINNMHIAPYEEGNRFNHDPLRSRKLLLHKKEIIKLGERTREIGYSLIPLKLYLKHGQCKVLLGVARGKKIHDKRQALKDKAMKRDVDRAIKDRY</sequence>
<dbReference type="EMBL" id="AP006716">
    <property type="protein sequence ID" value="BAE05413.1"/>
    <property type="molecule type" value="Genomic_DNA"/>
</dbReference>
<dbReference type="RefSeq" id="WP_011276368.1">
    <property type="nucleotide sequence ID" value="NC_007168.1"/>
</dbReference>
<dbReference type="SMR" id="Q4L4L2"/>
<dbReference type="GeneID" id="93781428"/>
<dbReference type="KEGG" id="sha:SH2104"/>
<dbReference type="eggNOG" id="COG0691">
    <property type="taxonomic scope" value="Bacteria"/>
</dbReference>
<dbReference type="HOGENOM" id="CLU_108953_0_0_9"/>
<dbReference type="OrthoDB" id="9805462at2"/>
<dbReference type="Proteomes" id="UP000000543">
    <property type="component" value="Chromosome"/>
</dbReference>
<dbReference type="GO" id="GO:0005829">
    <property type="term" value="C:cytosol"/>
    <property type="evidence" value="ECO:0007669"/>
    <property type="project" value="TreeGrafter"/>
</dbReference>
<dbReference type="GO" id="GO:0003723">
    <property type="term" value="F:RNA binding"/>
    <property type="evidence" value="ECO:0007669"/>
    <property type="project" value="UniProtKB-UniRule"/>
</dbReference>
<dbReference type="GO" id="GO:0070929">
    <property type="term" value="P:trans-translation"/>
    <property type="evidence" value="ECO:0007669"/>
    <property type="project" value="UniProtKB-UniRule"/>
</dbReference>
<dbReference type="CDD" id="cd09294">
    <property type="entry name" value="SmpB"/>
    <property type="match status" value="1"/>
</dbReference>
<dbReference type="Gene3D" id="2.40.280.10">
    <property type="match status" value="1"/>
</dbReference>
<dbReference type="HAMAP" id="MF_00023">
    <property type="entry name" value="SmpB"/>
    <property type="match status" value="1"/>
</dbReference>
<dbReference type="InterPro" id="IPR023620">
    <property type="entry name" value="SmpB"/>
</dbReference>
<dbReference type="InterPro" id="IPR000037">
    <property type="entry name" value="SsrA-bd_prot"/>
</dbReference>
<dbReference type="InterPro" id="IPR020081">
    <property type="entry name" value="SsrA-bd_prot_CS"/>
</dbReference>
<dbReference type="NCBIfam" id="NF003843">
    <property type="entry name" value="PRK05422.1"/>
    <property type="match status" value="1"/>
</dbReference>
<dbReference type="NCBIfam" id="TIGR00086">
    <property type="entry name" value="smpB"/>
    <property type="match status" value="1"/>
</dbReference>
<dbReference type="PANTHER" id="PTHR30308:SF2">
    <property type="entry name" value="SSRA-BINDING PROTEIN"/>
    <property type="match status" value="1"/>
</dbReference>
<dbReference type="PANTHER" id="PTHR30308">
    <property type="entry name" value="TMRNA-BINDING COMPONENT OF TRANS-TRANSLATION TAGGING COMPLEX"/>
    <property type="match status" value="1"/>
</dbReference>
<dbReference type="Pfam" id="PF01668">
    <property type="entry name" value="SmpB"/>
    <property type="match status" value="1"/>
</dbReference>
<dbReference type="SUPFAM" id="SSF74982">
    <property type="entry name" value="Small protein B (SmpB)"/>
    <property type="match status" value="1"/>
</dbReference>
<dbReference type="PROSITE" id="PS01317">
    <property type="entry name" value="SSRP"/>
    <property type="match status" value="1"/>
</dbReference>